<gene>
    <name type="primary">MT-CYB</name>
    <name type="synonym">COB</name>
    <name type="synonym">CYTB</name>
    <name type="synonym">MTCYB</name>
</gene>
<sequence>MTNIRKTHPLIKIINSSFIDLPTPSNISAWWNFGSLLGICLILQILTGLFLAMHYTSDTTTAFSSVTHICRDVNYGWIIRYMHANGASMFFICLYMHVGRGLYYGSYTFMETWNIGIILLFTVMATAFMGYVLPWGQMSFWGATVITNLLSAIPYIGTDLVQWIWGGFSVDKATLTRFFAFHFILPFVVLALAAVHLLFLHETGSNNPSGISSDSDKIPFHPYYTVKDILGALLLILVLMLLVLFSPDLLGDPDNYTPANPLSTPPHIKPEWYFLFAYAILRSIPNKLGGVLALVLSILILAIAPLLHTSKQRGMMFRPISQCLFWLLVADLLTLTWIGGQPVEHPYITIGQLASILYFAILLVFMPIASIIENNILKW</sequence>
<protein>
    <recommendedName>
        <fullName>Cytochrome b</fullName>
    </recommendedName>
    <alternativeName>
        <fullName>Complex III subunit 3</fullName>
    </alternativeName>
    <alternativeName>
        <fullName>Complex III subunit III</fullName>
    </alternativeName>
    <alternativeName>
        <fullName>Cytochrome b-c1 complex subunit 3</fullName>
    </alternativeName>
    <alternativeName>
        <fullName>Ubiquinol-cytochrome-c reductase complex cytochrome b subunit</fullName>
    </alternativeName>
</protein>
<name>CYB_ERIBA</name>
<geneLocation type="mitochondrion"/>
<proteinExistence type="inferred from homology"/>
<feature type="chain" id="PRO_0000060939" description="Cytochrome b">
    <location>
        <begin position="1"/>
        <end position="379"/>
    </location>
</feature>
<feature type="transmembrane region" description="Helical" evidence="2">
    <location>
        <begin position="33"/>
        <end position="53"/>
    </location>
</feature>
<feature type="transmembrane region" description="Helical" evidence="2">
    <location>
        <begin position="77"/>
        <end position="98"/>
    </location>
</feature>
<feature type="transmembrane region" description="Helical" evidence="2">
    <location>
        <begin position="113"/>
        <end position="133"/>
    </location>
</feature>
<feature type="transmembrane region" description="Helical" evidence="2">
    <location>
        <begin position="178"/>
        <end position="198"/>
    </location>
</feature>
<feature type="transmembrane region" description="Helical" evidence="2">
    <location>
        <begin position="226"/>
        <end position="246"/>
    </location>
</feature>
<feature type="transmembrane region" description="Helical" evidence="2">
    <location>
        <begin position="288"/>
        <end position="308"/>
    </location>
</feature>
<feature type="transmembrane region" description="Helical" evidence="2">
    <location>
        <begin position="320"/>
        <end position="340"/>
    </location>
</feature>
<feature type="transmembrane region" description="Helical" evidence="2">
    <location>
        <begin position="347"/>
        <end position="367"/>
    </location>
</feature>
<feature type="binding site" description="axial binding residue" evidence="2">
    <location>
        <position position="83"/>
    </location>
    <ligand>
        <name>heme b</name>
        <dbReference type="ChEBI" id="CHEBI:60344"/>
        <label>b562</label>
    </ligand>
    <ligandPart>
        <name>Fe</name>
        <dbReference type="ChEBI" id="CHEBI:18248"/>
    </ligandPart>
</feature>
<feature type="binding site" description="axial binding residue" evidence="2">
    <location>
        <position position="97"/>
    </location>
    <ligand>
        <name>heme b</name>
        <dbReference type="ChEBI" id="CHEBI:60344"/>
        <label>b566</label>
    </ligand>
    <ligandPart>
        <name>Fe</name>
        <dbReference type="ChEBI" id="CHEBI:18248"/>
    </ligandPart>
</feature>
<feature type="binding site" description="axial binding residue" evidence="2">
    <location>
        <position position="182"/>
    </location>
    <ligand>
        <name>heme b</name>
        <dbReference type="ChEBI" id="CHEBI:60344"/>
        <label>b562</label>
    </ligand>
    <ligandPart>
        <name>Fe</name>
        <dbReference type="ChEBI" id="CHEBI:18248"/>
    </ligandPart>
</feature>
<feature type="binding site" description="axial binding residue" evidence="2">
    <location>
        <position position="196"/>
    </location>
    <ligand>
        <name>heme b</name>
        <dbReference type="ChEBI" id="CHEBI:60344"/>
        <label>b566</label>
    </ligand>
    <ligandPart>
        <name>Fe</name>
        <dbReference type="ChEBI" id="CHEBI:18248"/>
    </ligandPart>
</feature>
<feature type="binding site" evidence="2">
    <location>
        <position position="201"/>
    </location>
    <ligand>
        <name>a ubiquinone</name>
        <dbReference type="ChEBI" id="CHEBI:16389"/>
    </ligand>
</feature>
<reference key="1">
    <citation type="journal article" date="1995" name="J. Mol. Evol.">
        <title>A molecular view of pinniped relationships with particular emphasis on the true seals.</title>
        <authorList>
            <person name="Arnason U."/>
            <person name="Bodin K."/>
            <person name="Gullberg A."/>
            <person name="Ledje C."/>
            <person name="Mouchaty S."/>
        </authorList>
    </citation>
    <scope>NUCLEOTIDE SEQUENCE [GENOMIC DNA]</scope>
</reference>
<reference key="2">
    <citation type="book" date="1997" name="Molecular genetics of marine mammals">
        <title>Intra- and interfamilial systematic relationships of phocid seals as indicated by mitochondrial DNA sequences.</title>
        <editorList>
            <person name="Dizon A.E."/>
            <person name="Chivers S.J."/>
            <person name="Perrin W.F."/>
        </editorList>
        <authorList>
            <person name="Carr S.M."/>
            <person name="Perry E.A."/>
        </authorList>
    </citation>
    <scope>NUCLEOTIDE SEQUENCE [GENOMIC DNA] OF 1-134</scope>
</reference>
<reference key="3">
    <citation type="journal article" date="1995" name="J. Mammal.">
        <title>A phylogenetic perspective on the evolution of reproductive behavior in pagophilic seals of the Northwest Atlantic as indicated by mitochondrial DNA sequences.</title>
        <authorList>
            <person name="Perry E.A."/>
            <person name="Carr S.M."/>
            <person name="Bartlett S.E."/>
            <person name="Davidson W.S."/>
        </authorList>
    </citation>
    <scope>NUCLEOTIDE SEQUENCE [GENOMIC DNA] OF 51-130</scope>
    <source>
        <tissue>Muscle</tissue>
    </source>
</reference>
<dbReference type="EMBL" id="X82295">
    <property type="protein sequence ID" value="CAA57738.1"/>
    <property type="molecule type" value="Genomic_DNA"/>
</dbReference>
<dbReference type="EMBL" id="L19125">
    <property type="protein sequence ID" value="AAA74101.1"/>
    <property type="molecule type" value="Genomic_DNA"/>
</dbReference>
<dbReference type="EMBL" id="L39207">
    <property type="protein sequence ID" value="AAC28749.1"/>
    <property type="molecule type" value="Genomic_DNA"/>
</dbReference>
<dbReference type="PIR" id="S58461">
    <property type="entry name" value="S58461"/>
</dbReference>
<dbReference type="SMR" id="Q34409"/>
<dbReference type="GO" id="GO:0005743">
    <property type="term" value="C:mitochondrial inner membrane"/>
    <property type="evidence" value="ECO:0007669"/>
    <property type="project" value="UniProtKB-SubCell"/>
</dbReference>
<dbReference type="GO" id="GO:0045275">
    <property type="term" value="C:respiratory chain complex III"/>
    <property type="evidence" value="ECO:0007669"/>
    <property type="project" value="InterPro"/>
</dbReference>
<dbReference type="GO" id="GO:0046872">
    <property type="term" value="F:metal ion binding"/>
    <property type="evidence" value="ECO:0007669"/>
    <property type="project" value="UniProtKB-KW"/>
</dbReference>
<dbReference type="GO" id="GO:0008121">
    <property type="term" value="F:ubiquinol-cytochrome-c reductase activity"/>
    <property type="evidence" value="ECO:0007669"/>
    <property type="project" value="InterPro"/>
</dbReference>
<dbReference type="GO" id="GO:0006122">
    <property type="term" value="P:mitochondrial electron transport, ubiquinol to cytochrome c"/>
    <property type="evidence" value="ECO:0007669"/>
    <property type="project" value="TreeGrafter"/>
</dbReference>
<dbReference type="CDD" id="cd00290">
    <property type="entry name" value="cytochrome_b_C"/>
    <property type="match status" value="1"/>
</dbReference>
<dbReference type="CDD" id="cd00284">
    <property type="entry name" value="Cytochrome_b_N"/>
    <property type="match status" value="1"/>
</dbReference>
<dbReference type="FunFam" id="1.20.810.10:FF:000002">
    <property type="entry name" value="Cytochrome b"/>
    <property type="match status" value="1"/>
</dbReference>
<dbReference type="Gene3D" id="1.20.810.10">
    <property type="entry name" value="Cytochrome Bc1 Complex, Chain C"/>
    <property type="match status" value="1"/>
</dbReference>
<dbReference type="InterPro" id="IPR005798">
    <property type="entry name" value="Cyt_b/b6_C"/>
</dbReference>
<dbReference type="InterPro" id="IPR036150">
    <property type="entry name" value="Cyt_b/b6_C_sf"/>
</dbReference>
<dbReference type="InterPro" id="IPR005797">
    <property type="entry name" value="Cyt_b/b6_N"/>
</dbReference>
<dbReference type="InterPro" id="IPR027387">
    <property type="entry name" value="Cytb/b6-like_sf"/>
</dbReference>
<dbReference type="InterPro" id="IPR030689">
    <property type="entry name" value="Cytochrome_b"/>
</dbReference>
<dbReference type="InterPro" id="IPR048260">
    <property type="entry name" value="Cytochrome_b_C_euk/bac"/>
</dbReference>
<dbReference type="InterPro" id="IPR048259">
    <property type="entry name" value="Cytochrome_b_N_euk/bac"/>
</dbReference>
<dbReference type="InterPro" id="IPR016174">
    <property type="entry name" value="Di-haem_cyt_TM"/>
</dbReference>
<dbReference type="PANTHER" id="PTHR19271">
    <property type="entry name" value="CYTOCHROME B"/>
    <property type="match status" value="1"/>
</dbReference>
<dbReference type="PANTHER" id="PTHR19271:SF16">
    <property type="entry name" value="CYTOCHROME B"/>
    <property type="match status" value="1"/>
</dbReference>
<dbReference type="Pfam" id="PF00032">
    <property type="entry name" value="Cytochrom_B_C"/>
    <property type="match status" value="1"/>
</dbReference>
<dbReference type="Pfam" id="PF00033">
    <property type="entry name" value="Cytochrome_B"/>
    <property type="match status" value="1"/>
</dbReference>
<dbReference type="PIRSF" id="PIRSF038885">
    <property type="entry name" value="COB"/>
    <property type="match status" value="1"/>
</dbReference>
<dbReference type="SUPFAM" id="SSF81648">
    <property type="entry name" value="a domain/subunit of cytochrome bc1 complex (Ubiquinol-cytochrome c reductase)"/>
    <property type="match status" value="1"/>
</dbReference>
<dbReference type="SUPFAM" id="SSF81342">
    <property type="entry name" value="Transmembrane di-heme cytochromes"/>
    <property type="match status" value="1"/>
</dbReference>
<dbReference type="PROSITE" id="PS51003">
    <property type="entry name" value="CYTB_CTER"/>
    <property type="match status" value="1"/>
</dbReference>
<dbReference type="PROSITE" id="PS51002">
    <property type="entry name" value="CYTB_NTER"/>
    <property type="match status" value="1"/>
</dbReference>
<evidence type="ECO:0000250" key="1"/>
<evidence type="ECO:0000250" key="2">
    <source>
        <dbReference type="UniProtKB" id="P00157"/>
    </source>
</evidence>
<evidence type="ECO:0000255" key="3">
    <source>
        <dbReference type="PROSITE-ProRule" id="PRU00967"/>
    </source>
</evidence>
<evidence type="ECO:0000255" key="4">
    <source>
        <dbReference type="PROSITE-ProRule" id="PRU00968"/>
    </source>
</evidence>
<keyword id="KW-0249">Electron transport</keyword>
<keyword id="KW-0349">Heme</keyword>
<keyword id="KW-0408">Iron</keyword>
<keyword id="KW-0472">Membrane</keyword>
<keyword id="KW-0479">Metal-binding</keyword>
<keyword id="KW-0496">Mitochondrion</keyword>
<keyword id="KW-0999">Mitochondrion inner membrane</keyword>
<keyword id="KW-0679">Respiratory chain</keyword>
<keyword id="KW-0812">Transmembrane</keyword>
<keyword id="KW-1133">Transmembrane helix</keyword>
<keyword id="KW-0813">Transport</keyword>
<keyword id="KW-0830">Ubiquinone</keyword>
<accession>Q34409</accession>
<accession>Q34408</accession>
<accession>Q34410</accession>
<organism>
    <name type="scientific">Erignathus barbatus</name>
    <name type="common">Bearded seal</name>
    <dbReference type="NCBI Taxonomy" id="39304"/>
    <lineage>
        <taxon>Eukaryota</taxon>
        <taxon>Metazoa</taxon>
        <taxon>Chordata</taxon>
        <taxon>Craniata</taxon>
        <taxon>Vertebrata</taxon>
        <taxon>Euteleostomi</taxon>
        <taxon>Mammalia</taxon>
        <taxon>Eutheria</taxon>
        <taxon>Laurasiatheria</taxon>
        <taxon>Carnivora</taxon>
        <taxon>Caniformia</taxon>
        <taxon>Pinnipedia</taxon>
        <taxon>Phocidae</taxon>
        <taxon>Phocinae</taxon>
        <taxon>Erignathus</taxon>
    </lineage>
</organism>
<comment type="function">
    <text evidence="2">Component of the ubiquinol-cytochrome c reductase complex (complex III or cytochrome b-c1 complex) that is part of the mitochondrial respiratory chain. The b-c1 complex mediates electron transfer from ubiquinol to cytochrome c. Contributes to the generation of a proton gradient across the mitochondrial membrane that is then used for ATP synthesis.</text>
</comment>
<comment type="cofactor">
    <cofactor evidence="2">
        <name>heme b</name>
        <dbReference type="ChEBI" id="CHEBI:60344"/>
    </cofactor>
    <text evidence="2">Binds 2 heme b groups non-covalently.</text>
</comment>
<comment type="subunit">
    <text evidence="2">The cytochrome bc1 complex contains 11 subunits: 3 respiratory subunits (MT-CYB, CYC1 and UQCRFS1), 2 core proteins (UQCRC1 and UQCRC2) and 6 low-molecular weight proteins (UQCRH/QCR6, UQCRB/QCR7, UQCRQ/QCR8, UQCR10/QCR9, UQCR11/QCR10 and a cleavage product of UQCRFS1). This cytochrome bc1 complex then forms a dimer.</text>
</comment>
<comment type="subcellular location">
    <subcellularLocation>
        <location evidence="2">Mitochondrion inner membrane</location>
        <topology evidence="2">Multi-pass membrane protein</topology>
    </subcellularLocation>
</comment>
<comment type="miscellaneous">
    <text evidence="1">Heme 1 (or BL or b562) is low-potential and absorbs at about 562 nm, and heme 2 (or BH or b566) is high-potential and absorbs at about 566 nm.</text>
</comment>
<comment type="similarity">
    <text evidence="3 4">Belongs to the cytochrome b family.</text>
</comment>
<comment type="caution">
    <text evidence="2">The full-length protein contains only eight transmembrane helices, not nine as predicted by bioinformatics tools.</text>
</comment>